<keyword id="KW-0143">Chaperone</keyword>
<keyword id="KW-0963">Cytoplasm</keyword>
<keyword id="KW-0342">GTP-binding</keyword>
<keyword id="KW-0996">Nickel insertion</keyword>
<keyword id="KW-0547">Nucleotide-binding</keyword>
<protein>
    <recommendedName>
        <fullName evidence="1">Urease accessory protein UreG</fullName>
    </recommendedName>
</protein>
<dbReference type="EMBL" id="CP001150">
    <property type="protein sequence ID" value="ACM01489.1"/>
    <property type="molecule type" value="Genomic_DNA"/>
</dbReference>
<dbReference type="RefSeq" id="WP_015920866.1">
    <property type="nucleotide sequence ID" value="NC_011963.1"/>
</dbReference>
<dbReference type="SMR" id="B9KK42"/>
<dbReference type="GeneID" id="67447036"/>
<dbReference type="KEGG" id="rsk:RSKD131_1629"/>
<dbReference type="HOGENOM" id="CLU_072144_1_0_5"/>
<dbReference type="GO" id="GO:0005737">
    <property type="term" value="C:cytoplasm"/>
    <property type="evidence" value="ECO:0007669"/>
    <property type="project" value="UniProtKB-SubCell"/>
</dbReference>
<dbReference type="GO" id="GO:0005525">
    <property type="term" value="F:GTP binding"/>
    <property type="evidence" value="ECO:0007669"/>
    <property type="project" value="UniProtKB-KW"/>
</dbReference>
<dbReference type="GO" id="GO:0003924">
    <property type="term" value="F:GTPase activity"/>
    <property type="evidence" value="ECO:0007669"/>
    <property type="project" value="InterPro"/>
</dbReference>
<dbReference type="GO" id="GO:0016151">
    <property type="term" value="F:nickel cation binding"/>
    <property type="evidence" value="ECO:0007669"/>
    <property type="project" value="UniProtKB-UniRule"/>
</dbReference>
<dbReference type="GO" id="GO:0043419">
    <property type="term" value="P:urea catabolic process"/>
    <property type="evidence" value="ECO:0007669"/>
    <property type="project" value="InterPro"/>
</dbReference>
<dbReference type="CDD" id="cd05540">
    <property type="entry name" value="UreG"/>
    <property type="match status" value="1"/>
</dbReference>
<dbReference type="Gene3D" id="3.40.50.300">
    <property type="entry name" value="P-loop containing nucleotide triphosphate hydrolases"/>
    <property type="match status" value="1"/>
</dbReference>
<dbReference type="HAMAP" id="MF_01389">
    <property type="entry name" value="UreG"/>
    <property type="match status" value="1"/>
</dbReference>
<dbReference type="InterPro" id="IPR003495">
    <property type="entry name" value="CobW/HypB/UreG_nucleotide-bd"/>
</dbReference>
<dbReference type="InterPro" id="IPR027417">
    <property type="entry name" value="P-loop_NTPase"/>
</dbReference>
<dbReference type="InterPro" id="IPR004400">
    <property type="entry name" value="UreG"/>
</dbReference>
<dbReference type="NCBIfam" id="TIGR00101">
    <property type="entry name" value="ureG"/>
    <property type="match status" value="1"/>
</dbReference>
<dbReference type="PANTHER" id="PTHR31715">
    <property type="entry name" value="UREASE ACCESSORY PROTEIN G"/>
    <property type="match status" value="1"/>
</dbReference>
<dbReference type="PANTHER" id="PTHR31715:SF0">
    <property type="entry name" value="UREASE ACCESSORY PROTEIN G"/>
    <property type="match status" value="1"/>
</dbReference>
<dbReference type="Pfam" id="PF02492">
    <property type="entry name" value="cobW"/>
    <property type="match status" value="1"/>
</dbReference>
<dbReference type="PIRSF" id="PIRSF005624">
    <property type="entry name" value="Ni-bind_GTPase"/>
    <property type="match status" value="1"/>
</dbReference>
<dbReference type="SUPFAM" id="SSF52540">
    <property type="entry name" value="P-loop containing nucleoside triphosphate hydrolases"/>
    <property type="match status" value="1"/>
</dbReference>
<name>UREG_CERSK</name>
<gene>
    <name evidence="1" type="primary">ureG</name>
    <name type="ordered locus">RSKD131_1629</name>
</gene>
<proteinExistence type="inferred from homology"/>
<comment type="function">
    <text evidence="1">Facilitates the functional incorporation of the urease nickel metallocenter. This process requires GTP hydrolysis, probably effectuated by UreG.</text>
</comment>
<comment type="subunit">
    <text evidence="1">Homodimer. UreD, UreF and UreG form a complex that acts as a GTP-hydrolysis-dependent molecular chaperone, activating the urease apoprotein by helping to assemble the nickel containing metallocenter of UreC. The UreE protein probably delivers the nickel.</text>
</comment>
<comment type="subcellular location">
    <subcellularLocation>
        <location evidence="1">Cytoplasm</location>
    </subcellularLocation>
</comment>
<comment type="similarity">
    <text evidence="1">Belongs to the SIMIBI class G3E GTPase family. UreG subfamily.</text>
</comment>
<reference key="1">
    <citation type="journal article" date="2009" name="J. Bacteriol.">
        <title>Complete genome sequence of Rhodobacter sphaeroides KD131.</title>
        <authorList>
            <person name="Lim S.-K."/>
            <person name="Kim S.J."/>
            <person name="Cha S.H."/>
            <person name="Oh Y.-K."/>
            <person name="Rhee H.-J."/>
            <person name="Kim M.-S."/>
            <person name="Lee J.K."/>
        </authorList>
    </citation>
    <scope>NUCLEOTIDE SEQUENCE [LARGE SCALE GENOMIC DNA]</scope>
    <source>
        <strain>KD131 / KCTC 12085</strain>
    </source>
</reference>
<accession>B9KK42</accession>
<organism>
    <name type="scientific">Cereibacter sphaeroides (strain KD131 / KCTC 12085)</name>
    <name type="common">Rhodobacter sphaeroides</name>
    <dbReference type="NCBI Taxonomy" id="557760"/>
    <lineage>
        <taxon>Bacteria</taxon>
        <taxon>Pseudomonadati</taxon>
        <taxon>Pseudomonadota</taxon>
        <taxon>Alphaproteobacteria</taxon>
        <taxon>Rhodobacterales</taxon>
        <taxon>Paracoccaceae</taxon>
        <taxon>Cereibacter</taxon>
    </lineage>
</organism>
<feature type="chain" id="PRO_1000184269" description="Urease accessory protein UreG">
    <location>
        <begin position="1"/>
        <end position="207"/>
    </location>
</feature>
<feature type="binding site" evidence="1">
    <location>
        <begin position="12"/>
        <end position="19"/>
    </location>
    <ligand>
        <name>GTP</name>
        <dbReference type="ChEBI" id="CHEBI:37565"/>
    </ligand>
</feature>
<evidence type="ECO:0000255" key="1">
    <source>
        <dbReference type="HAMAP-Rule" id="MF_01389"/>
    </source>
</evidence>
<sequence length="207" mass="21952">MSHGPLRVGIGGPVGAGKTTLTEKLCAALAHRCSMAVITNDIYTREDAEALMRAQVLPAERIRGVETGGCPHTAIREDASINLAAVADLRRTFPDLDLILIESGGDNLAATFSPELADLTIYVIDTAAGQDIPRKRGPGLARSDLLVVNKIDLAPHVGVNLARLEADTQAARGQRPYVMARMRAGVGVEAIVAFLEREGGLLLLPQD</sequence>